<comment type="function">
    <text>Core component of nucleosome. Nucleosomes wrap and compact DNA into chromatin, limiting DNA accessibility to the cellular machineries which require DNA as a template. Histones thereby play a central role in transcription regulation, DNA repair, DNA replication and chromosomal stability. DNA accessibility is regulated via a complex set of post-translational modifications of histones, also called histone code, and nucleosome remodeling.</text>
</comment>
<comment type="subunit">
    <text>The nucleosome is a histone octamer containing two molecules each of H2A, H2B, H3 and H4 assembled in one H3-H4 heterotetramer and two H2A-H2B heterodimers. The octamer wraps approximately 147 bp of DNA.</text>
</comment>
<comment type="subcellular location">
    <subcellularLocation>
        <location evidence="1">Nucleus</location>
    </subcellularLocation>
    <subcellularLocation>
        <location evidence="1">Chromosome</location>
    </subcellularLocation>
</comment>
<comment type="PTM">
    <text evidence="1">Monoubiquitinated by BRE1 to form H2BK123ub1. H2BK123ub1 gives a specific tag for epigenetic transcriptional activation and is also prerequisite for H3K4me and H3K79me formation. H2BK123ub1 also modulates the formation of double-strand breaks during meiosis and is a prerequisite for DNA-damage checkpoint activation (By similarity).</text>
</comment>
<comment type="PTM">
    <text evidence="1">Acetylated by GCN5 to form H2BK11ac and H2BK16ac. H2BK16ac can also be formed by ESA1. Acetylation of N-terminal lysines and particularly formation of H2BK11acK16ac has a positive effect on transcription (By similarity).</text>
</comment>
<comment type="PTM">
    <text evidence="1">Sumoylation to form H2BK6su and probably also H2BK16su or H2BK17su, occurs preferentially near the telomeres and represses gene transcription.</text>
</comment>
<comment type="similarity">
    <text evidence="3">Belongs to the histone H2B family.</text>
</comment>
<comment type="caution">
    <text evidence="3">To ensure consistency between histone entries, we follow the 'Brno' nomenclature for histone modifications, with positions referring to those used in the literature for the 'closest' model organism. Due to slight variations in histone sequences between organisms and to the presence of initiator methionine in UniProtKB/Swiss-Prot sequences, the actual positions of modified amino acids in the sequence generally differ. In this entry the following conventions are used: H2BK6ac = acetylated Lys-7; H2BK6su = sumoylated Lys-7; H2BK11ac = acetylated Lys-14; H2BK16ac = acetylated Lys-24; H2BK16su = sumoylated Lys-24; H2BK17su = sumoylated Lys-25; H2BK123ub1 = monoubiquitinated Lys-134.</text>
</comment>
<dbReference type="EMBL" id="CH445356">
    <property type="protein sequence ID" value="EAT78152.1"/>
    <property type="molecule type" value="Genomic_DNA"/>
</dbReference>
<dbReference type="RefSeq" id="XP_001804794.1">
    <property type="nucleotide sequence ID" value="XM_001804742.1"/>
</dbReference>
<dbReference type="SMR" id="Q0U1A0"/>
<dbReference type="FunCoup" id="Q0U1A0">
    <property type="interactions" value="921"/>
</dbReference>
<dbReference type="STRING" id="321614.Q0U1A0"/>
<dbReference type="EnsemblFungi" id="SNOT_14612">
    <property type="protein sequence ID" value="SNOT_14612"/>
    <property type="gene ID" value="SNOG_14612"/>
</dbReference>
<dbReference type="GeneID" id="5981719"/>
<dbReference type="KEGG" id="pno:SNOG_14612"/>
<dbReference type="VEuPathDB" id="FungiDB:JI435_146120"/>
<dbReference type="eggNOG" id="KOG1744">
    <property type="taxonomic scope" value="Eukaryota"/>
</dbReference>
<dbReference type="HOGENOM" id="CLU_075666_1_3_1"/>
<dbReference type="InParanoid" id="Q0U1A0"/>
<dbReference type="OMA" id="FCPFAIR"/>
<dbReference type="Proteomes" id="UP000001055">
    <property type="component" value="Unassembled WGS sequence"/>
</dbReference>
<dbReference type="GO" id="GO:0000786">
    <property type="term" value="C:nucleosome"/>
    <property type="evidence" value="ECO:0007669"/>
    <property type="project" value="UniProtKB-KW"/>
</dbReference>
<dbReference type="GO" id="GO:0005634">
    <property type="term" value="C:nucleus"/>
    <property type="evidence" value="ECO:0007669"/>
    <property type="project" value="UniProtKB-SubCell"/>
</dbReference>
<dbReference type="GO" id="GO:0003677">
    <property type="term" value="F:DNA binding"/>
    <property type="evidence" value="ECO:0000318"/>
    <property type="project" value="GO_Central"/>
</dbReference>
<dbReference type="GO" id="GO:0046982">
    <property type="term" value="F:protein heterodimerization activity"/>
    <property type="evidence" value="ECO:0007669"/>
    <property type="project" value="InterPro"/>
</dbReference>
<dbReference type="GO" id="GO:0030527">
    <property type="term" value="F:structural constituent of chromatin"/>
    <property type="evidence" value="ECO:0007669"/>
    <property type="project" value="InterPro"/>
</dbReference>
<dbReference type="CDD" id="cd22910">
    <property type="entry name" value="HFD_H2B"/>
    <property type="match status" value="1"/>
</dbReference>
<dbReference type="FunFam" id="1.10.20.10:FF:000014">
    <property type="entry name" value="Histone H2B"/>
    <property type="match status" value="1"/>
</dbReference>
<dbReference type="Gene3D" id="1.10.20.10">
    <property type="entry name" value="Histone, subunit A"/>
    <property type="match status" value="1"/>
</dbReference>
<dbReference type="InterPro" id="IPR009072">
    <property type="entry name" value="Histone-fold"/>
</dbReference>
<dbReference type="InterPro" id="IPR007125">
    <property type="entry name" value="Histone_H2A/H2B/H3"/>
</dbReference>
<dbReference type="InterPro" id="IPR000558">
    <property type="entry name" value="Histone_H2B"/>
</dbReference>
<dbReference type="InterPro" id="IPR055333">
    <property type="entry name" value="HISTONE_H2B_site"/>
</dbReference>
<dbReference type="PANTHER" id="PTHR23428">
    <property type="entry name" value="HISTONE H2B"/>
    <property type="match status" value="1"/>
</dbReference>
<dbReference type="Pfam" id="PF00125">
    <property type="entry name" value="Histone"/>
    <property type="match status" value="1"/>
</dbReference>
<dbReference type="PRINTS" id="PR00621">
    <property type="entry name" value="HISTONEH2B"/>
</dbReference>
<dbReference type="SMART" id="SM00427">
    <property type="entry name" value="H2B"/>
    <property type="match status" value="1"/>
</dbReference>
<dbReference type="SUPFAM" id="SSF47113">
    <property type="entry name" value="Histone-fold"/>
    <property type="match status" value="1"/>
</dbReference>
<dbReference type="PROSITE" id="PS00357">
    <property type="entry name" value="HISTONE_H2B"/>
    <property type="match status" value="1"/>
</dbReference>
<reference key="1">
    <citation type="journal article" date="2007" name="Plant Cell">
        <title>Dothideomycete-plant interactions illuminated by genome sequencing and EST analysis of the wheat pathogen Stagonospora nodorum.</title>
        <authorList>
            <person name="Hane J.K."/>
            <person name="Lowe R.G.T."/>
            <person name="Solomon P.S."/>
            <person name="Tan K.-C."/>
            <person name="Schoch C.L."/>
            <person name="Spatafora J.W."/>
            <person name="Crous P.W."/>
            <person name="Kodira C.D."/>
            <person name="Birren B.W."/>
            <person name="Galagan J.E."/>
            <person name="Torriani S.F.F."/>
            <person name="McDonald B.A."/>
            <person name="Oliver R.P."/>
        </authorList>
    </citation>
    <scope>NUCLEOTIDE SEQUENCE [LARGE SCALE GENOMIC DNA]</scope>
    <source>
        <strain>SN15 / ATCC MYA-4574 / FGSC 10173</strain>
    </source>
</reference>
<sequence>MPPKAQKTPTTGGKAPAGKAPVEKKEAGKKTAAPSGEKKKRTKTRKETYSSYIYKVLKQVHPDTGISNRAMSILNSFVTTTHIFERVATEASKLAAYNKKSTISSREIQTSVRLILPGELAKHAVSEGTKAVTKYSSSTK</sequence>
<keyword id="KW-0007">Acetylation</keyword>
<keyword id="KW-0158">Chromosome</keyword>
<keyword id="KW-0238">DNA-binding</keyword>
<keyword id="KW-1017">Isopeptide bond</keyword>
<keyword id="KW-0544">Nucleosome core</keyword>
<keyword id="KW-0539">Nucleus</keyword>
<keyword id="KW-0832">Ubl conjugation</keyword>
<evidence type="ECO:0000250" key="1"/>
<evidence type="ECO:0000256" key="2">
    <source>
        <dbReference type="SAM" id="MobiDB-lite"/>
    </source>
</evidence>
<evidence type="ECO:0000305" key="3"/>
<proteinExistence type="inferred from homology"/>
<gene>
    <name type="primary">HTB1</name>
    <name type="ORF">SNOG_14612</name>
</gene>
<accession>Q0U1A0</accession>
<feature type="initiator methionine" description="Removed" evidence="1">
    <location>
        <position position="1"/>
    </location>
</feature>
<feature type="chain" id="PRO_0000297851" description="Histone H2B">
    <location>
        <begin position="2"/>
        <end position="140"/>
    </location>
</feature>
<feature type="region of interest" description="Disordered" evidence="2">
    <location>
        <begin position="1"/>
        <end position="47"/>
    </location>
</feature>
<feature type="modified residue" description="N6-acetyllysine; alternate" evidence="1">
    <location>
        <position position="7"/>
    </location>
</feature>
<feature type="modified residue" description="N6-acetyllysine" evidence="1">
    <location>
        <position position="14"/>
    </location>
</feature>
<feature type="modified residue" description="N6-acetyllysine; alternate" evidence="1">
    <location>
        <position position="24"/>
    </location>
</feature>
<feature type="cross-link" description="Glycyl lysine isopeptide (Lys-Gly) (interchain with G-Cter in SUMO); alternate" evidence="1">
    <location>
        <position position="7"/>
    </location>
</feature>
<feature type="cross-link" description="Glycyl lysine isopeptide (Lys-Gly) (interchain with G-Cter in SUMO); alternate" evidence="1">
    <location>
        <position position="24"/>
    </location>
</feature>
<feature type="cross-link" description="Glycyl lysine isopeptide (Lys-Gly) (interchain with G-Cter in SUMO)" evidence="1">
    <location>
        <position position="25"/>
    </location>
</feature>
<feature type="cross-link" description="Glycyl lysine isopeptide (Lys-Gly) (interchain with G-Cter in ubiquitin)" evidence="1">
    <location>
        <position position="134"/>
    </location>
</feature>
<organism>
    <name type="scientific">Phaeosphaeria nodorum (strain SN15 / ATCC MYA-4574 / FGSC 10173)</name>
    <name type="common">Glume blotch fungus</name>
    <name type="synonym">Parastagonospora nodorum</name>
    <dbReference type="NCBI Taxonomy" id="321614"/>
    <lineage>
        <taxon>Eukaryota</taxon>
        <taxon>Fungi</taxon>
        <taxon>Dikarya</taxon>
        <taxon>Ascomycota</taxon>
        <taxon>Pezizomycotina</taxon>
        <taxon>Dothideomycetes</taxon>
        <taxon>Pleosporomycetidae</taxon>
        <taxon>Pleosporales</taxon>
        <taxon>Pleosporineae</taxon>
        <taxon>Phaeosphaeriaceae</taxon>
        <taxon>Parastagonospora</taxon>
    </lineage>
</organism>
<protein>
    <recommendedName>
        <fullName>Histone H2B</fullName>
    </recommendedName>
</protein>
<name>H2B_PHANO</name>